<accession>A3M1T4</accession>
<dbReference type="EC" id="5.4.99.12" evidence="1"/>
<dbReference type="EMBL" id="CP000521">
    <property type="protein sequence ID" value="ABO10878.2"/>
    <property type="molecule type" value="Genomic_DNA"/>
</dbReference>
<dbReference type="RefSeq" id="WP_001190100.1">
    <property type="nucleotide sequence ID" value="NZ_CACVBA010000001.1"/>
</dbReference>
<dbReference type="SMR" id="A3M1T4"/>
<dbReference type="KEGG" id="acb:A1S_0423"/>
<dbReference type="HOGENOM" id="CLU_014673_0_2_6"/>
<dbReference type="GO" id="GO:0003723">
    <property type="term" value="F:RNA binding"/>
    <property type="evidence" value="ECO:0007669"/>
    <property type="project" value="InterPro"/>
</dbReference>
<dbReference type="GO" id="GO:0160147">
    <property type="term" value="F:tRNA pseudouridine(38-40) synthase activity"/>
    <property type="evidence" value="ECO:0007669"/>
    <property type="project" value="UniProtKB-EC"/>
</dbReference>
<dbReference type="GO" id="GO:0031119">
    <property type="term" value="P:tRNA pseudouridine synthesis"/>
    <property type="evidence" value="ECO:0007669"/>
    <property type="project" value="UniProtKB-UniRule"/>
</dbReference>
<dbReference type="CDD" id="cd02570">
    <property type="entry name" value="PseudoU_synth_EcTruA"/>
    <property type="match status" value="1"/>
</dbReference>
<dbReference type="FunFam" id="3.30.70.580:FF:000001">
    <property type="entry name" value="tRNA pseudouridine synthase A"/>
    <property type="match status" value="1"/>
</dbReference>
<dbReference type="Gene3D" id="3.30.70.660">
    <property type="entry name" value="Pseudouridine synthase I, catalytic domain, C-terminal subdomain"/>
    <property type="match status" value="1"/>
</dbReference>
<dbReference type="Gene3D" id="3.30.70.580">
    <property type="entry name" value="Pseudouridine synthase I, catalytic domain, N-terminal subdomain"/>
    <property type="match status" value="1"/>
</dbReference>
<dbReference type="HAMAP" id="MF_00171">
    <property type="entry name" value="TruA"/>
    <property type="match status" value="1"/>
</dbReference>
<dbReference type="InterPro" id="IPR020103">
    <property type="entry name" value="PsdUridine_synth_cat_dom_sf"/>
</dbReference>
<dbReference type="InterPro" id="IPR001406">
    <property type="entry name" value="PsdUridine_synth_TruA"/>
</dbReference>
<dbReference type="InterPro" id="IPR020097">
    <property type="entry name" value="PsdUridine_synth_TruA_a/b_dom"/>
</dbReference>
<dbReference type="InterPro" id="IPR020095">
    <property type="entry name" value="PsdUridine_synth_TruA_C"/>
</dbReference>
<dbReference type="InterPro" id="IPR020094">
    <property type="entry name" value="TruA/RsuA/RluB/E/F_N"/>
</dbReference>
<dbReference type="NCBIfam" id="TIGR00071">
    <property type="entry name" value="hisT_truA"/>
    <property type="match status" value="1"/>
</dbReference>
<dbReference type="PANTHER" id="PTHR11142">
    <property type="entry name" value="PSEUDOURIDYLATE SYNTHASE"/>
    <property type="match status" value="1"/>
</dbReference>
<dbReference type="PANTHER" id="PTHR11142:SF0">
    <property type="entry name" value="TRNA PSEUDOURIDINE SYNTHASE-LIKE 1"/>
    <property type="match status" value="1"/>
</dbReference>
<dbReference type="Pfam" id="PF01416">
    <property type="entry name" value="PseudoU_synth_1"/>
    <property type="match status" value="2"/>
</dbReference>
<dbReference type="PIRSF" id="PIRSF001430">
    <property type="entry name" value="tRNA_psdUrid_synth"/>
    <property type="match status" value="1"/>
</dbReference>
<dbReference type="SUPFAM" id="SSF55120">
    <property type="entry name" value="Pseudouridine synthase"/>
    <property type="match status" value="1"/>
</dbReference>
<name>TRUA_ACIBT</name>
<proteinExistence type="inferred from homology"/>
<protein>
    <recommendedName>
        <fullName evidence="1">tRNA pseudouridine synthase A</fullName>
        <ecNumber evidence="1">5.4.99.12</ecNumber>
    </recommendedName>
    <alternativeName>
        <fullName evidence="1">tRNA pseudouridine(38-40) synthase</fullName>
    </alternativeName>
    <alternativeName>
        <fullName evidence="1">tRNA pseudouridylate synthase I</fullName>
    </alternativeName>
    <alternativeName>
        <fullName evidence="1">tRNA-uridine isomerase I</fullName>
    </alternativeName>
</protein>
<reference key="1">
    <citation type="journal article" date="2007" name="Genes Dev.">
        <title>New insights into Acinetobacter baumannii pathogenesis revealed by high-density pyrosequencing and transposon mutagenesis.</title>
        <authorList>
            <person name="Smith M.G."/>
            <person name="Gianoulis T.A."/>
            <person name="Pukatzki S."/>
            <person name="Mekalanos J.J."/>
            <person name="Ornston L.N."/>
            <person name="Gerstein M."/>
            <person name="Snyder M."/>
        </authorList>
    </citation>
    <scope>NUCLEOTIDE SEQUENCE [LARGE SCALE GENOMIC DNA]</scope>
    <source>
        <strain>ATCC 17978 / DSM 105126 / CIP 53.77 / LMG 1025 / NCDC KC755 / 5377</strain>
    </source>
</reference>
<organism>
    <name type="scientific">Acinetobacter baumannii (strain ATCC 17978 / DSM 105126 / CIP 53.77 / LMG 1025 / NCDC KC755 / 5377)</name>
    <dbReference type="NCBI Taxonomy" id="400667"/>
    <lineage>
        <taxon>Bacteria</taxon>
        <taxon>Pseudomonadati</taxon>
        <taxon>Pseudomonadota</taxon>
        <taxon>Gammaproteobacteria</taxon>
        <taxon>Moraxellales</taxon>
        <taxon>Moraxellaceae</taxon>
        <taxon>Acinetobacter</taxon>
        <taxon>Acinetobacter calcoaceticus/baumannii complex</taxon>
    </lineage>
</organism>
<evidence type="ECO:0000255" key="1">
    <source>
        <dbReference type="HAMAP-Rule" id="MF_00171"/>
    </source>
</evidence>
<feature type="chain" id="PRO_1000097711" description="tRNA pseudouridine synthase A">
    <location>
        <begin position="1"/>
        <end position="265"/>
    </location>
</feature>
<feature type="active site" description="Nucleophile" evidence="1">
    <location>
        <position position="53"/>
    </location>
</feature>
<feature type="binding site" evidence="1">
    <location>
        <position position="111"/>
    </location>
    <ligand>
        <name>substrate</name>
    </ligand>
</feature>
<sequence>MQRYAVGIEFSGIQYRGWQTQQPGVASVQETIERVLSKIADEPITLHGAGRTDAGVHATNMVAHFDTNAIRPERGWIMGANSQLPKDISIQWIKQMDEEFHARFKATARRYRYVVYNAPHRPALLHKQVTHIYQKLDVQKMIKAASKFEGTHNFETFRAAACQSNQPVRHVKHCRLFEHGRYLVLDIQADGFLHHMVRNIMGCLLEIGQGMYEIDHIDAMFAAEDRKAAGITAPPDGLYFIQCYYPEQFDLPHPPLGPHWLNLPE</sequence>
<comment type="function">
    <text evidence="1">Formation of pseudouridine at positions 38, 39 and 40 in the anticodon stem and loop of transfer RNAs.</text>
</comment>
<comment type="catalytic activity">
    <reaction evidence="1">
        <text>uridine(38/39/40) in tRNA = pseudouridine(38/39/40) in tRNA</text>
        <dbReference type="Rhea" id="RHEA:22376"/>
        <dbReference type="Rhea" id="RHEA-COMP:10085"/>
        <dbReference type="Rhea" id="RHEA-COMP:10087"/>
        <dbReference type="ChEBI" id="CHEBI:65314"/>
        <dbReference type="ChEBI" id="CHEBI:65315"/>
        <dbReference type="EC" id="5.4.99.12"/>
    </reaction>
</comment>
<comment type="subunit">
    <text evidence="1">Homodimer.</text>
</comment>
<comment type="similarity">
    <text evidence="1">Belongs to the tRNA pseudouridine synthase TruA family.</text>
</comment>
<keyword id="KW-0413">Isomerase</keyword>
<keyword id="KW-0819">tRNA processing</keyword>
<gene>
    <name evidence="1" type="primary">truA</name>
    <name type="ordered locus">A1S_0423</name>
</gene>